<dbReference type="EC" id="4.1.1.31" evidence="1"/>
<dbReference type="EMBL" id="AE007317">
    <property type="protein sequence ID" value="AAK99778.1"/>
    <property type="molecule type" value="Genomic_DNA"/>
</dbReference>
<dbReference type="PIR" id="F97993">
    <property type="entry name" value="F97993"/>
</dbReference>
<dbReference type="RefSeq" id="NP_358568.1">
    <property type="nucleotide sequence ID" value="NC_003098.1"/>
</dbReference>
<dbReference type="RefSeq" id="WP_000058147.1">
    <property type="nucleotide sequence ID" value="NC_003098.1"/>
</dbReference>
<dbReference type="SMR" id="Q8DPW5"/>
<dbReference type="STRING" id="171101.spr0974"/>
<dbReference type="KEGG" id="spr:spr0974"/>
<dbReference type="PATRIC" id="fig|171101.6.peg.1060"/>
<dbReference type="eggNOG" id="COG2352">
    <property type="taxonomic scope" value="Bacteria"/>
</dbReference>
<dbReference type="HOGENOM" id="CLU_006557_2_0_9"/>
<dbReference type="Proteomes" id="UP000000586">
    <property type="component" value="Chromosome"/>
</dbReference>
<dbReference type="GO" id="GO:0005829">
    <property type="term" value="C:cytosol"/>
    <property type="evidence" value="ECO:0000318"/>
    <property type="project" value="GO_Central"/>
</dbReference>
<dbReference type="GO" id="GO:0000287">
    <property type="term" value="F:magnesium ion binding"/>
    <property type="evidence" value="ECO:0007669"/>
    <property type="project" value="UniProtKB-UniRule"/>
</dbReference>
<dbReference type="GO" id="GO:0008964">
    <property type="term" value="F:phosphoenolpyruvate carboxylase activity"/>
    <property type="evidence" value="ECO:0000318"/>
    <property type="project" value="GO_Central"/>
</dbReference>
<dbReference type="GO" id="GO:0015977">
    <property type="term" value="P:carbon fixation"/>
    <property type="evidence" value="ECO:0007669"/>
    <property type="project" value="UniProtKB-UniRule"/>
</dbReference>
<dbReference type="GO" id="GO:0006107">
    <property type="term" value="P:oxaloacetate metabolic process"/>
    <property type="evidence" value="ECO:0007669"/>
    <property type="project" value="UniProtKB-UniRule"/>
</dbReference>
<dbReference type="GO" id="GO:0006099">
    <property type="term" value="P:tricarboxylic acid cycle"/>
    <property type="evidence" value="ECO:0007669"/>
    <property type="project" value="InterPro"/>
</dbReference>
<dbReference type="Gene3D" id="1.20.1440.90">
    <property type="entry name" value="Phosphoenolpyruvate/pyruvate domain"/>
    <property type="match status" value="1"/>
</dbReference>
<dbReference type="HAMAP" id="MF_00595">
    <property type="entry name" value="PEPcase_type1"/>
    <property type="match status" value="1"/>
</dbReference>
<dbReference type="InterPro" id="IPR021135">
    <property type="entry name" value="PEP_COase"/>
</dbReference>
<dbReference type="InterPro" id="IPR022805">
    <property type="entry name" value="PEP_COase_bac/pln-type"/>
</dbReference>
<dbReference type="InterPro" id="IPR018129">
    <property type="entry name" value="PEP_COase_Lys_AS"/>
</dbReference>
<dbReference type="InterPro" id="IPR033129">
    <property type="entry name" value="PEPCASE_His_AS"/>
</dbReference>
<dbReference type="InterPro" id="IPR015813">
    <property type="entry name" value="Pyrv/PenolPyrv_kinase-like_dom"/>
</dbReference>
<dbReference type="NCBIfam" id="NF000584">
    <property type="entry name" value="PRK00009.1"/>
    <property type="match status" value="1"/>
</dbReference>
<dbReference type="PANTHER" id="PTHR30523">
    <property type="entry name" value="PHOSPHOENOLPYRUVATE CARBOXYLASE"/>
    <property type="match status" value="1"/>
</dbReference>
<dbReference type="PANTHER" id="PTHR30523:SF6">
    <property type="entry name" value="PHOSPHOENOLPYRUVATE CARBOXYLASE"/>
    <property type="match status" value="1"/>
</dbReference>
<dbReference type="Pfam" id="PF00311">
    <property type="entry name" value="PEPcase"/>
    <property type="match status" value="1"/>
</dbReference>
<dbReference type="PRINTS" id="PR00150">
    <property type="entry name" value="PEPCARBXLASE"/>
</dbReference>
<dbReference type="SUPFAM" id="SSF51621">
    <property type="entry name" value="Phosphoenolpyruvate/pyruvate domain"/>
    <property type="match status" value="1"/>
</dbReference>
<dbReference type="PROSITE" id="PS00781">
    <property type="entry name" value="PEPCASE_1"/>
    <property type="match status" value="1"/>
</dbReference>
<dbReference type="PROSITE" id="PS00393">
    <property type="entry name" value="PEPCASE_2"/>
    <property type="match status" value="1"/>
</dbReference>
<reference key="1">
    <citation type="journal article" date="2001" name="J. Bacteriol.">
        <title>Genome of the bacterium Streptococcus pneumoniae strain R6.</title>
        <authorList>
            <person name="Hoskins J."/>
            <person name="Alborn W.E. Jr."/>
            <person name="Arnold J."/>
            <person name="Blaszczak L.C."/>
            <person name="Burgett S."/>
            <person name="DeHoff B.S."/>
            <person name="Estrem S.T."/>
            <person name="Fritz L."/>
            <person name="Fu D.-J."/>
            <person name="Fuller W."/>
            <person name="Geringer C."/>
            <person name="Gilmour R."/>
            <person name="Glass J.S."/>
            <person name="Khoja H."/>
            <person name="Kraft A.R."/>
            <person name="Lagace R.E."/>
            <person name="LeBlanc D.J."/>
            <person name="Lee L.N."/>
            <person name="Lefkowitz E.J."/>
            <person name="Lu J."/>
            <person name="Matsushima P."/>
            <person name="McAhren S.M."/>
            <person name="McHenney M."/>
            <person name="McLeaster K."/>
            <person name="Mundy C.W."/>
            <person name="Nicas T.I."/>
            <person name="Norris F.H."/>
            <person name="O'Gara M."/>
            <person name="Peery R.B."/>
            <person name="Robertson G.T."/>
            <person name="Rockey P."/>
            <person name="Sun P.-M."/>
            <person name="Winkler M.E."/>
            <person name="Yang Y."/>
            <person name="Young-Bellido M."/>
            <person name="Zhao G."/>
            <person name="Zook C.A."/>
            <person name="Baltz R.H."/>
            <person name="Jaskunas S.R."/>
            <person name="Rosteck P.R. Jr."/>
            <person name="Skatrud P.L."/>
            <person name="Glass J.I."/>
        </authorList>
    </citation>
    <scope>NUCLEOTIDE SEQUENCE [LARGE SCALE GENOMIC DNA]</scope>
    <source>
        <strain>ATCC BAA-255 / R6</strain>
    </source>
</reference>
<organism>
    <name type="scientific">Streptococcus pneumoniae (strain ATCC BAA-255 / R6)</name>
    <dbReference type="NCBI Taxonomy" id="171101"/>
    <lineage>
        <taxon>Bacteria</taxon>
        <taxon>Bacillati</taxon>
        <taxon>Bacillota</taxon>
        <taxon>Bacilli</taxon>
        <taxon>Lactobacillales</taxon>
        <taxon>Streptococcaceae</taxon>
        <taxon>Streptococcus</taxon>
    </lineage>
</organism>
<sequence length="898" mass="103209">MSLQKLENSSNKSVVQEEVLILTELLEDITKNMLAPETFEKIIQLKELSTQEDYQGLNRLVTSLSNDEMVYISRYFSILPLLINISEDVDLAYEINHQNNIDQDYLGKLSTTIKLVAEKENAVEILEHLNVVPVLTAHPTQVQRKSMLDLTNHIHSLLRKYRDVKLGLINKDKWYNDLRRYIEIIMQTDMIREKKLKVTNEITNAMEYYNSSFLKAVPHLTTEYKRLAQAHGLNLKQAKPITMGMWIGGDRDGNPFVTAKTLKQSALTQCEVIMNYYDKKIYQLYREFSLSTSIVNVSKQVREMARQSKDNSIYREKELYRRALFDIQSKIQATKTYLIEDEEVGTRYETANDFYKDLIAIRDSLLENKGESLISGDFVELLQAVEIFGFYLASIDMRQDSSVYEACVAELLKSAGIHSRYSELSEEEKCDLLLKELEEDPRILSATHAEKSELLAKELAIFKTARVLKDKLGDDVIRQTIISHATSLSDMLELAILLKEVGLVDTERARVQIVPLFETIEDLDHSEETMRKYLSLSLAKKWIDSRNNYQEIMLGYSDSNKDGGYLSSCWTLYKAQQQLTAIGDEFGVKVTFFHGRGGTVGRGGGPTYEAITSQPLKSIKDRIRLTEQGEVIGNKYGNKDAAYYNLEMLVSAAINRMITQKKSDTNTPNRYEAIMDQVVDRSYDIYRDLVFGNEHFYDYFFESSPIKAISSFNIGSRPAARKTITEIGGLRAIPWVFSWSQSRVMFPGWYGVGSSFKEFINKNPENIAILRDMYQNWPFFQSLLSNVDMVLSKSNMNIAFEYAKLCEDEQVKAIYETILNEWQVTKNVILAIEGHDELLADNPYLKASLDYRMPYFNILNYIQLELIKRQRRGELSSDQERLIHITINGIATGLRNSG</sequence>
<proteinExistence type="inferred from homology"/>
<name>CAPP_STRR6</name>
<keyword id="KW-0120">Carbon dioxide fixation</keyword>
<keyword id="KW-0456">Lyase</keyword>
<keyword id="KW-0460">Magnesium</keyword>
<keyword id="KW-1185">Reference proteome</keyword>
<accession>Q8DPW5</accession>
<protein>
    <recommendedName>
        <fullName evidence="1">Phosphoenolpyruvate carboxylase</fullName>
        <shortName evidence="1">PEPC</shortName>
        <shortName evidence="1">PEPCase</shortName>
        <ecNumber evidence="1">4.1.1.31</ecNumber>
    </recommendedName>
</protein>
<gene>
    <name evidence="1" type="primary">ppc</name>
    <name type="ordered locus">spr0974</name>
</gene>
<feature type="chain" id="PRO_0000166631" description="Phosphoenolpyruvate carboxylase">
    <location>
        <begin position="1"/>
        <end position="898"/>
    </location>
</feature>
<feature type="active site" evidence="1">
    <location>
        <position position="138"/>
    </location>
</feature>
<feature type="active site" evidence="1">
    <location>
        <position position="561"/>
    </location>
</feature>
<evidence type="ECO:0000255" key="1">
    <source>
        <dbReference type="HAMAP-Rule" id="MF_00595"/>
    </source>
</evidence>
<comment type="function">
    <text evidence="1">Forms oxaloacetate, a four-carbon dicarboxylic acid source for the tricarboxylic acid cycle.</text>
</comment>
<comment type="catalytic activity">
    <reaction evidence="1">
        <text>oxaloacetate + phosphate = phosphoenolpyruvate + hydrogencarbonate</text>
        <dbReference type="Rhea" id="RHEA:28370"/>
        <dbReference type="ChEBI" id="CHEBI:16452"/>
        <dbReference type="ChEBI" id="CHEBI:17544"/>
        <dbReference type="ChEBI" id="CHEBI:43474"/>
        <dbReference type="ChEBI" id="CHEBI:58702"/>
        <dbReference type="EC" id="4.1.1.31"/>
    </reaction>
</comment>
<comment type="cofactor">
    <cofactor evidence="1">
        <name>Mg(2+)</name>
        <dbReference type="ChEBI" id="CHEBI:18420"/>
    </cofactor>
</comment>
<comment type="similarity">
    <text evidence="1">Belongs to the PEPCase type 1 family.</text>
</comment>